<dbReference type="EMBL" id="AB001684">
    <property type="protein sequence ID" value="BAA57965.1"/>
    <property type="molecule type" value="Genomic_DNA"/>
</dbReference>
<dbReference type="PIR" id="T07317">
    <property type="entry name" value="T07317"/>
</dbReference>
<dbReference type="RefSeq" id="NP_045889.1">
    <property type="nucleotide sequence ID" value="NC_001865.1"/>
</dbReference>
<dbReference type="SMR" id="P56357"/>
<dbReference type="GeneID" id="809113"/>
<dbReference type="GO" id="GO:0009507">
    <property type="term" value="C:chloroplast"/>
    <property type="evidence" value="ECO:0007669"/>
    <property type="project" value="UniProtKB-SubCell"/>
</dbReference>
<dbReference type="GO" id="GO:0015934">
    <property type="term" value="C:large ribosomal subunit"/>
    <property type="evidence" value="ECO:0007669"/>
    <property type="project" value="InterPro"/>
</dbReference>
<dbReference type="GO" id="GO:0003735">
    <property type="term" value="F:structural constituent of ribosome"/>
    <property type="evidence" value="ECO:0007669"/>
    <property type="project" value="InterPro"/>
</dbReference>
<dbReference type="GO" id="GO:0006412">
    <property type="term" value="P:translation"/>
    <property type="evidence" value="ECO:0007669"/>
    <property type="project" value="UniProtKB-UniRule"/>
</dbReference>
<dbReference type="HAMAP" id="MF_00340">
    <property type="entry name" value="Ribosomal_bL32"/>
    <property type="match status" value="1"/>
</dbReference>
<dbReference type="InterPro" id="IPR002677">
    <property type="entry name" value="Ribosomal_bL32"/>
</dbReference>
<dbReference type="InterPro" id="IPR011332">
    <property type="entry name" value="Ribosomal_zn-bd"/>
</dbReference>
<dbReference type="Pfam" id="PF01783">
    <property type="entry name" value="Ribosomal_L32p"/>
    <property type="match status" value="1"/>
</dbReference>
<dbReference type="SUPFAM" id="SSF57829">
    <property type="entry name" value="Zn-binding ribosomal proteins"/>
    <property type="match status" value="1"/>
</dbReference>
<sequence>MAVPKKRKSKMKTRLRKAQWKSEASREAAKALSKAKTVIKSLLAANSANLESNSENSN</sequence>
<accession>P56357</accession>
<name>RK32_CHLVU</name>
<organism>
    <name type="scientific">Chlorella vulgaris</name>
    <name type="common">Green alga</name>
    <dbReference type="NCBI Taxonomy" id="3077"/>
    <lineage>
        <taxon>Eukaryota</taxon>
        <taxon>Viridiplantae</taxon>
        <taxon>Chlorophyta</taxon>
        <taxon>core chlorophytes</taxon>
        <taxon>Trebouxiophyceae</taxon>
        <taxon>Chlorellales</taxon>
        <taxon>Chlorellaceae</taxon>
        <taxon>Chlorella clade</taxon>
        <taxon>Chlorella</taxon>
    </lineage>
</organism>
<reference key="1">
    <citation type="journal article" date="1997" name="Proc. Natl. Acad. Sci. U.S.A.">
        <title>Complete nucleotide sequence of the chloroplast genome from the green alga Chlorella vulgaris: the existence of genes possibly involved in chloroplast division.</title>
        <authorList>
            <person name="Wakasugi T."/>
            <person name="Nagai T."/>
            <person name="Kapoor M."/>
            <person name="Sugita M."/>
            <person name="Ito M."/>
            <person name="Ito S."/>
            <person name="Tsudzuki J."/>
            <person name="Nakashima K."/>
            <person name="Tsudzuki T."/>
            <person name="Suzuki Y."/>
            <person name="Hamada A."/>
            <person name="Ohta T."/>
            <person name="Inamura A."/>
            <person name="Yoshinaga K."/>
            <person name="Sugiura M."/>
        </authorList>
    </citation>
    <scope>NUCLEOTIDE SEQUENCE [LARGE SCALE GENOMIC DNA]</scope>
    <source>
        <strain>IAM C-27 / Tamiya</strain>
    </source>
</reference>
<proteinExistence type="inferred from homology"/>
<gene>
    <name type="primary">rpl32</name>
</gene>
<protein>
    <recommendedName>
        <fullName evidence="3">Large ribosomal subunit protein bL32c</fullName>
    </recommendedName>
    <alternativeName>
        <fullName>50S ribosomal protein L32, chloroplastic</fullName>
    </alternativeName>
</protein>
<geneLocation type="chloroplast"/>
<feature type="initiator methionine" description="Removed" evidence="1">
    <location>
        <position position="1"/>
    </location>
</feature>
<feature type="chain" id="PRO_0000172457" description="Large ribosomal subunit protein bL32c">
    <location>
        <begin position="2"/>
        <end position="58"/>
    </location>
</feature>
<feature type="region of interest" description="Disordered" evidence="2">
    <location>
        <begin position="1"/>
        <end position="25"/>
    </location>
</feature>
<feature type="compositionally biased region" description="Basic residues" evidence="2">
    <location>
        <begin position="1"/>
        <end position="19"/>
    </location>
</feature>
<evidence type="ECO:0000250" key="1"/>
<evidence type="ECO:0000256" key="2">
    <source>
        <dbReference type="SAM" id="MobiDB-lite"/>
    </source>
</evidence>
<evidence type="ECO:0000305" key="3"/>
<keyword id="KW-0150">Chloroplast</keyword>
<keyword id="KW-0934">Plastid</keyword>
<keyword id="KW-0687">Ribonucleoprotein</keyword>
<keyword id="KW-0689">Ribosomal protein</keyword>
<comment type="subcellular location">
    <subcellularLocation>
        <location>Plastid</location>
        <location>Chloroplast</location>
    </subcellularLocation>
</comment>
<comment type="similarity">
    <text evidence="3">Belongs to the bacterial ribosomal protein bL32 family.</text>
</comment>